<feature type="chain" id="PRO_1000097092" description="Pantothenate synthetase">
    <location>
        <begin position="1"/>
        <end position="285"/>
    </location>
</feature>
<feature type="active site" description="Proton donor" evidence="1">
    <location>
        <position position="37"/>
    </location>
</feature>
<feature type="binding site" evidence="1">
    <location>
        <begin position="30"/>
        <end position="37"/>
    </location>
    <ligand>
        <name>ATP</name>
        <dbReference type="ChEBI" id="CHEBI:30616"/>
    </ligand>
</feature>
<feature type="binding site" evidence="1">
    <location>
        <position position="61"/>
    </location>
    <ligand>
        <name>(R)-pantoate</name>
        <dbReference type="ChEBI" id="CHEBI:15980"/>
    </ligand>
</feature>
<feature type="binding site" evidence="1">
    <location>
        <position position="61"/>
    </location>
    <ligand>
        <name>beta-alanine</name>
        <dbReference type="ChEBI" id="CHEBI:57966"/>
    </ligand>
</feature>
<feature type="binding site" evidence="1">
    <location>
        <begin position="149"/>
        <end position="152"/>
    </location>
    <ligand>
        <name>ATP</name>
        <dbReference type="ChEBI" id="CHEBI:30616"/>
    </ligand>
</feature>
<feature type="binding site" evidence="1">
    <location>
        <position position="155"/>
    </location>
    <ligand>
        <name>(R)-pantoate</name>
        <dbReference type="ChEBI" id="CHEBI:15980"/>
    </ligand>
</feature>
<feature type="binding site" evidence="1">
    <location>
        <begin position="186"/>
        <end position="189"/>
    </location>
    <ligand>
        <name>ATP</name>
        <dbReference type="ChEBI" id="CHEBI:30616"/>
    </ligand>
</feature>
<name>PANC_ECTM1</name>
<evidence type="ECO:0000255" key="1">
    <source>
        <dbReference type="HAMAP-Rule" id="MF_00158"/>
    </source>
</evidence>
<reference key="1">
    <citation type="submission" date="2007-04" db="EMBL/GenBank/DDBJ databases">
        <title>Complete sequence of Pseudomonas mendocina ymp.</title>
        <authorList>
            <consortium name="US DOE Joint Genome Institute"/>
            <person name="Copeland A."/>
            <person name="Lucas S."/>
            <person name="Lapidus A."/>
            <person name="Barry K."/>
            <person name="Glavina del Rio T."/>
            <person name="Dalin E."/>
            <person name="Tice H."/>
            <person name="Pitluck S."/>
            <person name="Kiss H."/>
            <person name="Brettin T."/>
            <person name="Detter J.C."/>
            <person name="Bruce D."/>
            <person name="Han C."/>
            <person name="Schmutz J."/>
            <person name="Larimer F."/>
            <person name="Land M."/>
            <person name="Hauser L."/>
            <person name="Kyrpides N."/>
            <person name="Mikhailova N."/>
            <person name="Hersman L."/>
            <person name="Dubois J."/>
            <person name="Maurice P."/>
            <person name="Richardson P."/>
        </authorList>
    </citation>
    <scope>NUCLEOTIDE SEQUENCE [LARGE SCALE GENOMIC DNA]</scope>
    <source>
        <strain>ymp</strain>
    </source>
</reference>
<accession>A4XYC5</accession>
<proteinExistence type="inferred from homology"/>
<keyword id="KW-0067">ATP-binding</keyword>
<keyword id="KW-0963">Cytoplasm</keyword>
<keyword id="KW-0436">Ligase</keyword>
<keyword id="KW-0547">Nucleotide-binding</keyword>
<keyword id="KW-0566">Pantothenate biosynthesis</keyword>
<gene>
    <name evidence="1" type="primary">panC</name>
    <name type="ordered locus">Pmen_3593</name>
</gene>
<sequence length="285" mass="30872">MNTVKTLRELRAAVAQARAEGKQIGFVPTMGNLHAGHASLVQIAAQRADFVVASIFVNPLQFGAGEDLDKYPRTLAADQERLLAAGCHLLFHPDAAEMYPHGMGDQTRVTVPGVSEGLCGASRPGHFEGVATVVTKLFNMVQPDLAVFGEKDYQQLAVIRALVQDLNMPIQIIGAPTQRAEDGLALSSRNGYLSAEQRAVAPALYRSLQSIAEALHHGARDYARLIETAQTQQREAGFTPDYLEIRNALNLRPAQLDDRHLVVLTAAHLGSTRLIDNLLVELAGQ</sequence>
<protein>
    <recommendedName>
        <fullName evidence="1">Pantothenate synthetase</fullName>
        <shortName evidence="1">PS</shortName>
        <ecNumber evidence="1">6.3.2.1</ecNumber>
    </recommendedName>
    <alternativeName>
        <fullName evidence="1">Pantoate--beta-alanine ligase</fullName>
    </alternativeName>
    <alternativeName>
        <fullName evidence="1">Pantoate-activating enzyme</fullName>
    </alternativeName>
</protein>
<organism>
    <name type="scientific">Ectopseudomonas mendocina (strain ymp)</name>
    <name type="common">Pseudomonas mendocina</name>
    <dbReference type="NCBI Taxonomy" id="399739"/>
    <lineage>
        <taxon>Bacteria</taxon>
        <taxon>Pseudomonadati</taxon>
        <taxon>Pseudomonadota</taxon>
        <taxon>Gammaproteobacteria</taxon>
        <taxon>Pseudomonadales</taxon>
        <taxon>Pseudomonadaceae</taxon>
        <taxon>Ectopseudomonas</taxon>
    </lineage>
</organism>
<comment type="function">
    <text evidence="1">Catalyzes the condensation of pantoate with beta-alanine in an ATP-dependent reaction via a pantoyl-adenylate intermediate.</text>
</comment>
<comment type="catalytic activity">
    <reaction evidence="1">
        <text>(R)-pantoate + beta-alanine + ATP = (R)-pantothenate + AMP + diphosphate + H(+)</text>
        <dbReference type="Rhea" id="RHEA:10912"/>
        <dbReference type="ChEBI" id="CHEBI:15378"/>
        <dbReference type="ChEBI" id="CHEBI:15980"/>
        <dbReference type="ChEBI" id="CHEBI:29032"/>
        <dbReference type="ChEBI" id="CHEBI:30616"/>
        <dbReference type="ChEBI" id="CHEBI:33019"/>
        <dbReference type="ChEBI" id="CHEBI:57966"/>
        <dbReference type="ChEBI" id="CHEBI:456215"/>
        <dbReference type="EC" id="6.3.2.1"/>
    </reaction>
</comment>
<comment type="pathway">
    <text evidence="1">Cofactor biosynthesis; (R)-pantothenate biosynthesis; (R)-pantothenate from (R)-pantoate and beta-alanine: step 1/1.</text>
</comment>
<comment type="subunit">
    <text evidence="1">Homodimer.</text>
</comment>
<comment type="subcellular location">
    <subcellularLocation>
        <location evidence="1">Cytoplasm</location>
    </subcellularLocation>
</comment>
<comment type="miscellaneous">
    <text evidence="1">The reaction proceeds by a bi uni uni bi ping pong mechanism.</text>
</comment>
<comment type="similarity">
    <text evidence="1">Belongs to the pantothenate synthetase family.</text>
</comment>
<dbReference type="EC" id="6.3.2.1" evidence="1"/>
<dbReference type="EMBL" id="CP000680">
    <property type="protein sequence ID" value="ABP86341.1"/>
    <property type="molecule type" value="Genomic_DNA"/>
</dbReference>
<dbReference type="SMR" id="A4XYC5"/>
<dbReference type="STRING" id="399739.Pmen_3593"/>
<dbReference type="KEGG" id="pmy:Pmen_3593"/>
<dbReference type="PATRIC" id="fig|399739.8.peg.3641"/>
<dbReference type="eggNOG" id="COG0414">
    <property type="taxonomic scope" value="Bacteria"/>
</dbReference>
<dbReference type="HOGENOM" id="CLU_047148_0_0_6"/>
<dbReference type="OrthoDB" id="9773087at2"/>
<dbReference type="UniPathway" id="UPA00028">
    <property type="reaction ID" value="UER00005"/>
</dbReference>
<dbReference type="GO" id="GO:0005829">
    <property type="term" value="C:cytosol"/>
    <property type="evidence" value="ECO:0007669"/>
    <property type="project" value="TreeGrafter"/>
</dbReference>
<dbReference type="GO" id="GO:0005524">
    <property type="term" value="F:ATP binding"/>
    <property type="evidence" value="ECO:0007669"/>
    <property type="project" value="UniProtKB-KW"/>
</dbReference>
<dbReference type="GO" id="GO:0004592">
    <property type="term" value="F:pantoate-beta-alanine ligase activity"/>
    <property type="evidence" value="ECO:0007669"/>
    <property type="project" value="UniProtKB-UniRule"/>
</dbReference>
<dbReference type="GO" id="GO:0015940">
    <property type="term" value="P:pantothenate biosynthetic process"/>
    <property type="evidence" value="ECO:0007669"/>
    <property type="project" value="UniProtKB-UniRule"/>
</dbReference>
<dbReference type="CDD" id="cd00560">
    <property type="entry name" value="PanC"/>
    <property type="match status" value="1"/>
</dbReference>
<dbReference type="FunFam" id="3.30.1300.10:FF:000001">
    <property type="entry name" value="Pantothenate synthetase"/>
    <property type="match status" value="1"/>
</dbReference>
<dbReference type="FunFam" id="3.40.50.620:FF:000013">
    <property type="entry name" value="Pantothenate synthetase"/>
    <property type="match status" value="1"/>
</dbReference>
<dbReference type="Gene3D" id="3.40.50.620">
    <property type="entry name" value="HUPs"/>
    <property type="match status" value="1"/>
</dbReference>
<dbReference type="Gene3D" id="3.30.1300.10">
    <property type="entry name" value="Pantoate-beta-alanine ligase, C-terminal domain"/>
    <property type="match status" value="1"/>
</dbReference>
<dbReference type="HAMAP" id="MF_00158">
    <property type="entry name" value="PanC"/>
    <property type="match status" value="1"/>
</dbReference>
<dbReference type="InterPro" id="IPR003721">
    <property type="entry name" value="Pantoate_ligase"/>
</dbReference>
<dbReference type="InterPro" id="IPR042176">
    <property type="entry name" value="Pantoate_ligase_C"/>
</dbReference>
<dbReference type="InterPro" id="IPR014729">
    <property type="entry name" value="Rossmann-like_a/b/a_fold"/>
</dbReference>
<dbReference type="NCBIfam" id="TIGR00018">
    <property type="entry name" value="panC"/>
    <property type="match status" value="1"/>
</dbReference>
<dbReference type="PANTHER" id="PTHR21299">
    <property type="entry name" value="CYTIDYLATE KINASE/PANTOATE-BETA-ALANINE LIGASE"/>
    <property type="match status" value="1"/>
</dbReference>
<dbReference type="PANTHER" id="PTHR21299:SF1">
    <property type="entry name" value="PANTOATE--BETA-ALANINE LIGASE"/>
    <property type="match status" value="1"/>
</dbReference>
<dbReference type="Pfam" id="PF02569">
    <property type="entry name" value="Pantoate_ligase"/>
    <property type="match status" value="1"/>
</dbReference>
<dbReference type="SUPFAM" id="SSF52374">
    <property type="entry name" value="Nucleotidylyl transferase"/>
    <property type="match status" value="1"/>
</dbReference>